<protein>
    <recommendedName>
        <fullName>Cytochrome b</fullName>
    </recommendedName>
    <alternativeName>
        <fullName>Complex III subunit 3</fullName>
    </alternativeName>
    <alternativeName>
        <fullName>Complex III subunit III</fullName>
    </alternativeName>
    <alternativeName>
        <fullName>Cytochrome b-c1 complex subunit 3</fullName>
    </alternativeName>
    <alternativeName>
        <fullName>Ubiquinol-cytochrome-c reductase complex cytochrome b subunit</fullName>
    </alternativeName>
</protein>
<evidence type="ECO:0000250" key="1"/>
<evidence type="ECO:0000250" key="2">
    <source>
        <dbReference type="UniProtKB" id="P00157"/>
    </source>
</evidence>
<evidence type="ECO:0000255" key="3">
    <source>
        <dbReference type="PROSITE-ProRule" id="PRU00967"/>
    </source>
</evidence>
<evidence type="ECO:0000255" key="4">
    <source>
        <dbReference type="PROSITE-ProRule" id="PRU00968"/>
    </source>
</evidence>
<organism>
    <name type="scientific">Rana amurensis</name>
    <name type="common">Siberian wood frog</name>
    <dbReference type="NCBI Taxonomy" id="109177"/>
    <lineage>
        <taxon>Eukaryota</taxon>
        <taxon>Metazoa</taxon>
        <taxon>Chordata</taxon>
        <taxon>Craniata</taxon>
        <taxon>Vertebrata</taxon>
        <taxon>Euteleostomi</taxon>
        <taxon>Amphibia</taxon>
        <taxon>Batrachia</taxon>
        <taxon>Anura</taxon>
        <taxon>Neobatrachia</taxon>
        <taxon>Ranoidea</taxon>
        <taxon>Ranidae</taxon>
        <taxon>Rana</taxon>
        <taxon>Rana</taxon>
    </lineage>
</organism>
<gene>
    <name type="primary">mt-cyb</name>
    <name type="synonym">cob</name>
    <name type="synonym">cytb</name>
    <name type="synonym">mtcyb</name>
</gene>
<reference key="1">
    <citation type="journal article" date="1999" name="Korean J. Biol. Sci.">
        <title>Genetic relationships of Rana amurensis based on mitochondrial cytochrome b gene sequences.</title>
        <authorList>
            <person name="Lee J.-E."/>
            <person name="Yang D.-E."/>
            <person name="Kim Y.-R."/>
            <person name="Lee H."/>
            <person name="Lee H.-I."/>
            <person name="Yang S.-Y."/>
            <person name="Lee H.-Y."/>
        </authorList>
    </citation>
    <scope>NUCLEOTIDE SEQUENCE [GENOMIC DNA]</scope>
    <source>
        <strain>Isolate KS102755</strain>
    </source>
</reference>
<dbReference type="EMBL" id="AF205094">
    <property type="protein sequence ID" value="AAF17093.1"/>
    <property type="molecule type" value="Genomic_DNA"/>
</dbReference>
<dbReference type="SMR" id="Q9T6R2"/>
<dbReference type="GO" id="GO:0005743">
    <property type="term" value="C:mitochondrial inner membrane"/>
    <property type="evidence" value="ECO:0007669"/>
    <property type="project" value="UniProtKB-SubCell"/>
</dbReference>
<dbReference type="GO" id="GO:0045275">
    <property type="term" value="C:respiratory chain complex III"/>
    <property type="evidence" value="ECO:0007669"/>
    <property type="project" value="InterPro"/>
</dbReference>
<dbReference type="GO" id="GO:0046872">
    <property type="term" value="F:metal ion binding"/>
    <property type="evidence" value="ECO:0007669"/>
    <property type="project" value="UniProtKB-KW"/>
</dbReference>
<dbReference type="GO" id="GO:0008121">
    <property type="term" value="F:ubiquinol-cytochrome-c reductase activity"/>
    <property type="evidence" value="ECO:0007669"/>
    <property type="project" value="InterPro"/>
</dbReference>
<dbReference type="GO" id="GO:0006122">
    <property type="term" value="P:mitochondrial electron transport, ubiquinol to cytochrome c"/>
    <property type="evidence" value="ECO:0007669"/>
    <property type="project" value="TreeGrafter"/>
</dbReference>
<dbReference type="CDD" id="cd00290">
    <property type="entry name" value="cytochrome_b_C"/>
    <property type="match status" value="1"/>
</dbReference>
<dbReference type="CDD" id="cd00284">
    <property type="entry name" value="Cytochrome_b_N"/>
    <property type="match status" value="1"/>
</dbReference>
<dbReference type="FunFam" id="1.20.810.10:FF:000002">
    <property type="entry name" value="Cytochrome b"/>
    <property type="match status" value="1"/>
</dbReference>
<dbReference type="Gene3D" id="1.20.810.10">
    <property type="entry name" value="Cytochrome Bc1 Complex, Chain C"/>
    <property type="match status" value="1"/>
</dbReference>
<dbReference type="InterPro" id="IPR005798">
    <property type="entry name" value="Cyt_b/b6_C"/>
</dbReference>
<dbReference type="InterPro" id="IPR036150">
    <property type="entry name" value="Cyt_b/b6_C_sf"/>
</dbReference>
<dbReference type="InterPro" id="IPR005797">
    <property type="entry name" value="Cyt_b/b6_N"/>
</dbReference>
<dbReference type="InterPro" id="IPR027387">
    <property type="entry name" value="Cytb/b6-like_sf"/>
</dbReference>
<dbReference type="InterPro" id="IPR030689">
    <property type="entry name" value="Cytochrome_b"/>
</dbReference>
<dbReference type="InterPro" id="IPR048260">
    <property type="entry name" value="Cytochrome_b_C_euk/bac"/>
</dbReference>
<dbReference type="InterPro" id="IPR048259">
    <property type="entry name" value="Cytochrome_b_N_euk/bac"/>
</dbReference>
<dbReference type="InterPro" id="IPR016174">
    <property type="entry name" value="Di-haem_cyt_TM"/>
</dbReference>
<dbReference type="PANTHER" id="PTHR19271">
    <property type="entry name" value="CYTOCHROME B"/>
    <property type="match status" value="1"/>
</dbReference>
<dbReference type="PANTHER" id="PTHR19271:SF16">
    <property type="entry name" value="CYTOCHROME B"/>
    <property type="match status" value="1"/>
</dbReference>
<dbReference type="Pfam" id="PF00032">
    <property type="entry name" value="Cytochrom_B_C"/>
    <property type="match status" value="1"/>
</dbReference>
<dbReference type="Pfam" id="PF00033">
    <property type="entry name" value="Cytochrome_B"/>
    <property type="match status" value="1"/>
</dbReference>
<dbReference type="PIRSF" id="PIRSF038885">
    <property type="entry name" value="COB"/>
    <property type="match status" value="1"/>
</dbReference>
<dbReference type="SUPFAM" id="SSF81648">
    <property type="entry name" value="a domain/subunit of cytochrome bc1 complex (Ubiquinol-cytochrome c reductase)"/>
    <property type="match status" value="1"/>
</dbReference>
<dbReference type="SUPFAM" id="SSF81342">
    <property type="entry name" value="Transmembrane di-heme cytochromes"/>
    <property type="match status" value="1"/>
</dbReference>
<dbReference type="PROSITE" id="PS51003">
    <property type="entry name" value="CYTB_CTER"/>
    <property type="match status" value="1"/>
</dbReference>
<dbReference type="PROSITE" id="PS51002">
    <property type="entry name" value="CYTB_NTER"/>
    <property type="match status" value="1"/>
</dbReference>
<geneLocation type="mitochondrion"/>
<accession>Q9T6R2</accession>
<feature type="chain" id="PRO_0000061481" description="Cytochrome b">
    <location>
        <begin position="1"/>
        <end position="380"/>
    </location>
</feature>
<feature type="transmembrane region" description="Helical" evidence="2">
    <location>
        <begin position="34"/>
        <end position="54"/>
    </location>
</feature>
<feature type="transmembrane region" description="Helical" evidence="2">
    <location>
        <begin position="78"/>
        <end position="99"/>
    </location>
</feature>
<feature type="transmembrane region" description="Helical" evidence="2">
    <location>
        <begin position="114"/>
        <end position="134"/>
    </location>
</feature>
<feature type="transmembrane region" description="Helical" evidence="2">
    <location>
        <begin position="179"/>
        <end position="199"/>
    </location>
</feature>
<feature type="transmembrane region" description="Helical" evidence="2">
    <location>
        <begin position="227"/>
        <end position="247"/>
    </location>
</feature>
<feature type="transmembrane region" description="Helical" evidence="2">
    <location>
        <begin position="289"/>
        <end position="309"/>
    </location>
</feature>
<feature type="transmembrane region" description="Helical" evidence="2">
    <location>
        <begin position="321"/>
        <end position="341"/>
    </location>
</feature>
<feature type="transmembrane region" description="Helical" evidence="2">
    <location>
        <begin position="348"/>
        <end position="368"/>
    </location>
</feature>
<feature type="binding site" description="axial binding residue" evidence="2">
    <location>
        <position position="84"/>
    </location>
    <ligand>
        <name>heme b</name>
        <dbReference type="ChEBI" id="CHEBI:60344"/>
        <label>b562</label>
    </ligand>
    <ligandPart>
        <name>Fe</name>
        <dbReference type="ChEBI" id="CHEBI:18248"/>
    </ligandPart>
</feature>
<feature type="binding site" description="axial binding residue" evidence="2">
    <location>
        <position position="98"/>
    </location>
    <ligand>
        <name>heme b</name>
        <dbReference type="ChEBI" id="CHEBI:60344"/>
        <label>b566</label>
    </ligand>
    <ligandPart>
        <name>Fe</name>
        <dbReference type="ChEBI" id="CHEBI:18248"/>
    </ligandPart>
</feature>
<feature type="binding site" description="axial binding residue" evidence="2">
    <location>
        <position position="183"/>
    </location>
    <ligand>
        <name>heme b</name>
        <dbReference type="ChEBI" id="CHEBI:60344"/>
        <label>b562</label>
    </ligand>
    <ligandPart>
        <name>Fe</name>
        <dbReference type="ChEBI" id="CHEBI:18248"/>
    </ligandPart>
</feature>
<feature type="binding site" description="axial binding residue" evidence="2">
    <location>
        <position position="197"/>
    </location>
    <ligand>
        <name>heme b</name>
        <dbReference type="ChEBI" id="CHEBI:60344"/>
        <label>b566</label>
    </ligand>
    <ligandPart>
        <name>Fe</name>
        <dbReference type="ChEBI" id="CHEBI:18248"/>
    </ligandPart>
</feature>
<feature type="binding site" evidence="2">
    <location>
        <position position="202"/>
    </location>
    <ligand>
        <name>a ubiquinone</name>
        <dbReference type="ChEBI" id="CHEBI:16389"/>
    </ligand>
</feature>
<name>CYB_RANAM</name>
<keyword id="KW-0249">Electron transport</keyword>
<keyword id="KW-0349">Heme</keyword>
<keyword id="KW-0408">Iron</keyword>
<keyword id="KW-0472">Membrane</keyword>
<keyword id="KW-0479">Metal-binding</keyword>
<keyword id="KW-0496">Mitochondrion</keyword>
<keyword id="KW-0999">Mitochondrion inner membrane</keyword>
<keyword id="KW-0679">Respiratory chain</keyword>
<keyword id="KW-0812">Transmembrane</keyword>
<keyword id="KW-1133">Transmembrane helix</keyword>
<keyword id="KW-0813">Transport</keyword>
<keyword id="KW-0830">Ubiquinone</keyword>
<comment type="function">
    <text evidence="2">Component of the ubiquinol-cytochrome c reductase complex (complex III or cytochrome b-c1 complex) that is part of the mitochondrial respiratory chain. The b-c1 complex mediates electron transfer from ubiquinol to cytochrome c. Contributes to the generation of a proton gradient across the mitochondrial membrane that is then used for ATP synthesis.</text>
</comment>
<comment type="cofactor">
    <cofactor evidence="2">
        <name>heme b</name>
        <dbReference type="ChEBI" id="CHEBI:60344"/>
    </cofactor>
    <text evidence="2">Binds 2 heme b groups non-covalently.</text>
</comment>
<comment type="subunit">
    <text evidence="2">The cytochrome bc1 complex contains 3 respiratory subunits (MT-CYB, CYC1 and UQCRFS1), 2 core proteins (UQCRC1 and UQCRC2) and probably 6 low-molecular weight proteins.</text>
</comment>
<comment type="subcellular location">
    <subcellularLocation>
        <location evidence="2">Mitochondrion inner membrane</location>
        <topology evidence="2">Multi-pass membrane protein</topology>
    </subcellularLocation>
</comment>
<comment type="miscellaneous">
    <text evidence="1">Heme 1 (or BL or b562) is low-potential and absorbs at about 562 nm, and heme 2 (or BH or b566) is high-potential and absorbs at about 566 nm.</text>
</comment>
<comment type="similarity">
    <text evidence="3 4">Belongs to the cytochrome b family.</text>
</comment>
<comment type="caution">
    <text evidence="2">The full-length protein contains only eight transmembrane helices, not nine as predicted by bioinformatics tools.</text>
</comment>
<proteinExistence type="inferred from homology"/>
<sequence>MTPTMRKFHPLLKFINYSFIDLPTPSNISASWNFGSLLGLCLIAQIATGLFLAMHYTADTSLAFSSIAHICRDVNNGWLLRNLHANGASFFFICIYFHIGRGLYYGSYLYKETWNIGVILLFLLMATAFVGYVLPWGQMSFWGATVITNLLSAAPYIGSNLVQWIWGGFSVDNATLTRFFTFHFILPFIITAVSLIHLLFLHQTGSSNPTGLNSNLDKVSFHPYFSYKDLLGFVIMLGALASLSTFAPNLLGDPDNFTPANPLVTPPHIKPEWYLLFAYAILRSIPNKLGGVLAVVLSIMVLFLMPIIHTSKLRSLMFRPIAKTFFWALIANTAILTWIGGQPVEDPFITIGQIASGLYFLIFVLLIPSLGLLENKLLKI</sequence>